<organism>
    <name type="scientific">Sodalis glossinidius (strain morsitans)</name>
    <dbReference type="NCBI Taxonomy" id="343509"/>
    <lineage>
        <taxon>Bacteria</taxon>
        <taxon>Pseudomonadati</taxon>
        <taxon>Pseudomonadota</taxon>
        <taxon>Gammaproteobacteria</taxon>
        <taxon>Enterobacterales</taxon>
        <taxon>Bruguierivoracaceae</taxon>
        <taxon>Sodalis</taxon>
    </lineage>
</organism>
<accession>Q2NRD9</accession>
<evidence type="ECO:0000255" key="1">
    <source>
        <dbReference type="HAMAP-Rule" id="MF_00513"/>
    </source>
</evidence>
<evidence type="ECO:0000305" key="2"/>
<gene>
    <name evidence="1" type="primary">argP</name>
    <name type="synonym">iciA</name>
    <name type="ordered locus">SG2011</name>
</gene>
<protein>
    <recommendedName>
        <fullName evidence="1">HTH-type transcriptional regulator ArgP</fullName>
    </recommendedName>
</protein>
<dbReference type="EMBL" id="AP008232">
    <property type="protein sequence ID" value="BAE75286.1"/>
    <property type="molecule type" value="Genomic_DNA"/>
</dbReference>
<dbReference type="RefSeq" id="WP_011411741.1">
    <property type="nucleotide sequence ID" value="NC_007712.1"/>
</dbReference>
<dbReference type="SMR" id="Q2NRD9"/>
<dbReference type="STRING" id="343509.SG2011"/>
<dbReference type="KEGG" id="sgl:SG2011"/>
<dbReference type="eggNOG" id="COG0583">
    <property type="taxonomic scope" value="Bacteria"/>
</dbReference>
<dbReference type="HOGENOM" id="CLU_063829_0_0_6"/>
<dbReference type="OrthoDB" id="3252676at2"/>
<dbReference type="Proteomes" id="UP000001932">
    <property type="component" value="Chromosome"/>
</dbReference>
<dbReference type="GO" id="GO:0003677">
    <property type="term" value="F:DNA binding"/>
    <property type="evidence" value="ECO:0007669"/>
    <property type="project" value="UniProtKB-UniRule"/>
</dbReference>
<dbReference type="GO" id="GO:0003700">
    <property type="term" value="F:DNA-binding transcription factor activity"/>
    <property type="evidence" value="ECO:0007669"/>
    <property type="project" value="UniProtKB-UniRule"/>
</dbReference>
<dbReference type="CDD" id="cd08428">
    <property type="entry name" value="PBP2_IciA_ArgP"/>
    <property type="match status" value="1"/>
</dbReference>
<dbReference type="FunFam" id="1.10.10.10:FF:000061">
    <property type="entry name" value="HTH-type transcriptional regulator ArgP"/>
    <property type="match status" value="1"/>
</dbReference>
<dbReference type="Gene3D" id="3.40.190.290">
    <property type="match status" value="1"/>
</dbReference>
<dbReference type="Gene3D" id="1.10.10.10">
    <property type="entry name" value="Winged helix-like DNA-binding domain superfamily/Winged helix DNA-binding domain"/>
    <property type="match status" value="1"/>
</dbReference>
<dbReference type="HAMAP" id="MF_00513">
    <property type="entry name" value="HTH_type_ArgP"/>
    <property type="match status" value="1"/>
</dbReference>
<dbReference type="InterPro" id="IPR017685">
    <property type="entry name" value="ArgP"/>
</dbReference>
<dbReference type="InterPro" id="IPR023490">
    <property type="entry name" value="ArgP_gammaproteobact"/>
</dbReference>
<dbReference type="InterPro" id="IPR050176">
    <property type="entry name" value="LTTR"/>
</dbReference>
<dbReference type="InterPro" id="IPR005119">
    <property type="entry name" value="LysR_subst-bd"/>
</dbReference>
<dbReference type="InterPro" id="IPR000847">
    <property type="entry name" value="Tscrpt_reg_HTH_LysR"/>
</dbReference>
<dbReference type="InterPro" id="IPR036388">
    <property type="entry name" value="WH-like_DNA-bd_sf"/>
</dbReference>
<dbReference type="InterPro" id="IPR036390">
    <property type="entry name" value="WH_DNA-bd_sf"/>
</dbReference>
<dbReference type="NCBIfam" id="TIGR03298">
    <property type="entry name" value="argP"/>
    <property type="match status" value="1"/>
</dbReference>
<dbReference type="NCBIfam" id="NF002964">
    <property type="entry name" value="PRK03635.1"/>
    <property type="match status" value="1"/>
</dbReference>
<dbReference type="NCBIfam" id="NF009888">
    <property type="entry name" value="PRK13348.1"/>
    <property type="match status" value="1"/>
</dbReference>
<dbReference type="PANTHER" id="PTHR30579:SF2">
    <property type="entry name" value="HTH-TYPE TRANSCRIPTIONAL REGULATOR ARGP"/>
    <property type="match status" value="1"/>
</dbReference>
<dbReference type="PANTHER" id="PTHR30579">
    <property type="entry name" value="TRANSCRIPTIONAL REGULATOR"/>
    <property type="match status" value="1"/>
</dbReference>
<dbReference type="Pfam" id="PF00126">
    <property type="entry name" value="HTH_1"/>
    <property type="match status" value="1"/>
</dbReference>
<dbReference type="Pfam" id="PF03466">
    <property type="entry name" value="LysR_substrate"/>
    <property type="match status" value="1"/>
</dbReference>
<dbReference type="PRINTS" id="PR00039">
    <property type="entry name" value="HTHLYSR"/>
</dbReference>
<dbReference type="SUPFAM" id="SSF53850">
    <property type="entry name" value="Periplasmic binding protein-like II"/>
    <property type="match status" value="1"/>
</dbReference>
<dbReference type="SUPFAM" id="SSF46785">
    <property type="entry name" value="Winged helix' DNA-binding domain"/>
    <property type="match status" value="1"/>
</dbReference>
<dbReference type="PROSITE" id="PS50931">
    <property type="entry name" value="HTH_LYSR"/>
    <property type="match status" value="1"/>
</dbReference>
<keyword id="KW-0238">DNA-binding</keyword>
<keyword id="KW-0804">Transcription</keyword>
<keyword id="KW-0805">Transcription regulation</keyword>
<name>ARGP_SODGM</name>
<sequence length="293" mass="33234">MKRPDYRTLQALDAVIRERGFERAAQKLCITQSAVSQRIKQLENLFGQPLLVRTIPPHPTEQGQKLLALLHQVELLEEEWLGSDTPLLLSLAVNADSLATWLLPALKPVLSDLPIRLNLQVEDETRTQERLRRGEVVGAVSIQPQPLPSCLVDRLGALDYLFVASPSFAARYFPNGVTRSALLKAPAVAFDHLDDMHQSFLQQNFDLSPGSVPCHIVNSSEAFVQLARQGTTCCMIPHLQIERELEQRELIDLTPGLYQRRMLYWHRFAPESRMMRKVTDALLDHGHQVLRQD</sequence>
<proteinExistence type="inferred from homology"/>
<comment type="function">
    <text evidence="1">Controls the transcription of genes involved in arginine and lysine metabolism.</text>
</comment>
<comment type="subunit">
    <text evidence="1">Homodimer.</text>
</comment>
<comment type="similarity">
    <text evidence="2">Belongs to the LysR transcriptional regulatory family.</text>
</comment>
<reference key="1">
    <citation type="journal article" date="2006" name="Genome Res.">
        <title>Massive genome erosion and functional adaptations provide insights into the symbiotic lifestyle of Sodalis glossinidius in the tsetse host.</title>
        <authorList>
            <person name="Toh H."/>
            <person name="Weiss B.L."/>
            <person name="Perkin S.A.H."/>
            <person name="Yamashita A."/>
            <person name="Oshima K."/>
            <person name="Hattori M."/>
            <person name="Aksoy S."/>
        </authorList>
    </citation>
    <scope>NUCLEOTIDE SEQUENCE [LARGE SCALE GENOMIC DNA]</scope>
    <source>
        <strain>morsitans</strain>
    </source>
</reference>
<feature type="chain" id="PRO_0000258617" description="HTH-type transcriptional regulator ArgP">
    <location>
        <begin position="1"/>
        <end position="293"/>
    </location>
</feature>
<feature type="domain" description="HTH lysR-type" evidence="1">
    <location>
        <begin position="4"/>
        <end position="60"/>
    </location>
</feature>
<feature type="DNA-binding region" description="H-T-H motif" evidence="1">
    <location>
        <begin position="21"/>
        <end position="40"/>
    </location>
</feature>